<reference key="1">
    <citation type="journal article" date="2005" name="Nature">
        <title>The genome of the social amoeba Dictyostelium discoideum.</title>
        <authorList>
            <person name="Eichinger L."/>
            <person name="Pachebat J.A."/>
            <person name="Gloeckner G."/>
            <person name="Rajandream M.A."/>
            <person name="Sucgang R."/>
            <person name="Berriman M."/>
            <person name="Song J."/>
            <person name="Olsen R."/>
            <person name="Szafranski K."/>
            <person name="Xu Q."/>
            <person name="Tunggal B."/>
            <person name="Kummerfeld S."/>
            <person name="Madera M."/>
            <person name="Konfortov B.A."/>
            <person name="Rivero F."/>
            <person name="Bankier A.T."/>
            <person name="Lehmann R."/>
            <person name="Hamlin N."/>
            <person name="Davies R."/>
            <person name="Gaudet P."/>
            <person name="Fey P."/>
            <person name="Pilcher K."/>
            <person name="Chen G."/>
            <person name="Saunders D."/>
            <person name="Sodergren E.J."/>
            <person name="Davis P."/>
            <person name="Kerhornou A."/>
            <person name="Nie X."/>
            <person name="Hall N."/>
            <person name="Anjard C."/>
            <person name="Hemphill L."/>
            <person name="Bason N."/>
            <person name="Farbrother P."/>
            <person name="Desany B."/>
            <person name="Just E."/>
            <person name="Morio T."/>
            <person name="Rost R."/>
            <person name="Churcher C.M."/>
            <person name="Cooper J."/>
            <person name="Haydock S."/>
            <person name="van Driessche N."/>
            <person name="Cronin A."/>
            <person name="Goodhead I."/>
            <person name="Muzny D.M."/>
            <person name="Mourier T."/>
            <person name="Pain A."/>
            <person name="Lu M."/>
            <person name="Harper D."/>
            <person name="Lindsay R."/>
            <person name="Hauser H."/>
            <person name="James K.D."/>
            <person name="Quiles M."/>
            <person name="Madan Babu M."/>
            <person name="Saito T."/>
            <person name="Buchrieser C."/>
            <person name="Wardroper A."/>
            <person name="Felder M."/>
            <person name="Thangavelu M."/>
            <person name="Johnson D."/>
            <person name="Knights A."/>
            <person name="Loulseged H."/>
            <person name="Mungall K.L."/>
            <person name="Oliver K."/>
            <person name="Price C."/>
            <person name="Quail M.A."/>
            <person name="Urushihara H."/>
            <person name="Hernandez J."/>
            <person name="Rabbinowitsch E."/>
            <person name="Steffen D."/>
            <person name="Sanders M."/>
            <person name="Ma J."/>
            <person name="Kohara Y."/>
            <person name="Sharp S."/>
            <person name="Simmonds M.N."/>
            <person name="Spiegler S."/>
            <person name="Tivey A."/>
            <person name="Sugano S."/>
            <person name="White B."/>
            <person name="Walker D."/>
            <person name="Woodward J.R."/>
            <person name="Winckler T."/>
            <person name="Tanaka Y."/>
            <person name="Shaulsky G."/>
            <person name="Schleicher M."/>
            <person name="Weinstock G.M."/>
            <person name="Rosenthal A."/>
            <person name="Cox E.C."/>
            <person name="Chisholm R.L."/>
            <person name="Gibbs R.A."/>
            <person name="Loomis W.F."/>
            <person name="Platzer M."/>
            <person name="Kay R.R."/>
            <person name="Williams J.G."/>
            <person name="Dear P.H."/>
            <person name="Noegel A.A."/>
            <person name="Barrell B.G."/>
            <person name="Kuspa A."/>
        </authorList>
    </citation>
    <scope>NUCLEOTIDE SEQUENCE [LARGE SCALE GENOMIC DNA]</scope>
    <source>
        <strain>AX4</strain>
    </source>
</reference>
<proteinExistence type="inferred from homology"/>
<accession>Q1ZXF1</accession>
<keyword id="KW-0276">Fatty acid metabolism</keyword>
<keyword id="KW-0443">Lipid metabolism</keyword>
<keyword id="KW-0456">Lyase</keyword>
<keyword id="KW-0496">Mitochondrion</keyword>
<keyword id="KW-1185">Reference proteome</keyword>
<keyword id="KW-0809">Transit peptide</keyword>
<name>ECHM_DICDI</name>
<feature type="transit peptide" description="Mitochondrion">
    <location>
        <begin position="1"/>
        <end position="42"/>
    </location>
</feature>
<feature type="chain" id="PRO_0000331592" description="Probable enoyl-CoA hydratase, mitochondrial">
    <location>
        <begin position="43"/>
        <end position="277"/>
    </location>
</feature>
<feature type="binding site" evidence="1">
    <location>
        <begin position="85"/>
        <end position="88"/>
    </location>
    <ligand>
        <name>substrate</name>
    </ligand>
</feature>
<feature type="binding site" evidence="1">
    <location>
        <position position="128"/>
    </location>
    <ligand>
        <name>substrate</name>
    </ligand>
</feature>
<feature type="site" description="Important for catalytic activity" evidence="1">
    <location>
        <position position="151"/>
    </location>
</feature>
<evidence type="ECO:0000250" key="1"/>
<evidence type="ECO:0000250" key="2">
    <source>
        <dbReference type="UniProtKB" id="P14604"/>
    </source>
</evidence>
<evidence type="ECO:0000250" key="3">
    <source>
        <dbReference type="UniProtKB" id="P30084"/>
    </source>
</evidence>
<evidence type="ECO:0000305" key="4"/>
<dbReference type="EC" id="4.2.1.17" evidence="3"/>
<dbReference type="EMBL" id="AAFI02000073">
    <property type="protein sequence ID" value="EAS66856.1"/>
    <property type="molecule type" value="Genomic_DNA"/>
</dbReference>
<dbReference type="RefSeq" id="XP_001134539.1">
    <property type="nucleotide sequence ID" value="XM_001134539.1"/>
</dbReference>
<dbReference type="SMR" id="Q1ZXF1"/>
<dbReference type="FunCoup" id="Q1ZXF1">
    <property type="interactions" value="516"/>
</dbReference>
<dbReference type="STRING" id="44689.Q1ZXF1"/>
<dbReference type="PaxDb" id="44689-DDB0232942"/>
<dbReference type="EnsemblProtists" id="EAS66856">
    <property type="protein sequence ID" value="EAS66856"/>
    <property type="gene ID" value="DDB_G0285071"/>
</dbReference>
<dbReference type="GeneID" id="8624884"/>
<dbReference type="KEGG" id="ddi:DDB_G0285071"/>
<dbReference type="dictyBase" id="DDB_G0285071">
    <property type="gene designation" value="echs1"/>
</dbReference>
<dbReference type="VEuPathDB" id="AmoebaDB:DDB_G0285071"/>
<dbReference type="eggNOG" id="KOG1680">
    <property type="taxonomic scope" value="Eukaryota"/>
</dbReference>
<dbReference type="HOGENOM" id="CLU_009834_7_6_1"/>
<dbReference type="InParanoid" id="Q1ZXF1"/>
<dbReference type="OMA" id="FCDARED"/>
<dbReference type="PhylomeDB" id="Q1ZXF1"/>
<dbReference type="Reactome" id="R-DDI-70895">
    <property type="pathway name" value="Branched-chain amino acid catabolism"/>
</dbReference>
<dbReference type="Reactome" id="R-DDI-77310">
    <property type="pathway name" value="Beta oxidation of lauroyl-CoA to decanoyl-CoA-CoA"/>
</dbReference>
<dbReference type="Reactome" id="R-DDI-77346">
    <property type="pathway name" value="Beta oxidation of decanoyl-CoA to octanoyl-CoA-CoA"/>
</dbReference>
<dbReference type="Reactome" id="R-DDI-77348">
    <property type="pathway name" value="Beta oxidation of octanoyl-CoA to hexanoyl-CoA"/>
</dbReference>
<dbReference type="Reactome" id="R-DDI-77350">
    <property type="pathway name" value="Beta oxidation of hexanoyl-CoA to butanoyl-CoA"/>
</dbReference>
<dbReference type="Reactome" id="R-DDI-77352">
    <property type="pathway name" value="Beta oxidation of butanoyl-CoA to acetyl-CoA"/>
</dbReference>
<dbReference type="UniPathway" id="UPA00659"/>
<dbReference type="PRO" id="PR:Q1ZXF1"/>
<dbReference type="Proteomes" id="UP000002195">
    <property type="component" value="Chromosome 4"/>
</dbReference>
<dbReference type="GO" id="GO:0005759">
    <property type="term" value="C:mitochondrial matrix"/>
    <property type="evidence" value="ECO:0007669"/>
    <property type="project" value="UniProtKB-SubCell"/>
</dbReference>
<dbReference type="GO" id="GO:0005739">
    <property type="term" value="C:mitochondrion"/>
    <property type="evidence" value="ECO:0000250"/>
    <property type="project" value="dictyBase"/>
</dbReference>
<dbReference type="GO" id="GO:0043956">
    <property type="term" value="F:3-hydroxypropionyl-CoA dehydratase activity"/>
    <property type="evidence" value="ECO:0007669"/>
    <property type="project" value="RHEA"/>
</dbReference>
<dbReference type="GO" id="GO:0120092">
    <property type="term" value="F:crotonyl-CoA hydratase activity"/>
    <property type="evidence" value="ECO:0007669"/>
    <property type="project" value="RHEA"/>
</dbReference>
<dbReference type="GO" id="GO:0006635">
    <property type="term" value="P:fatty acid beta-oxidation"/>
    <property type="evidence" value="ECO:0000318"/>
    <property type="project" value="GO_Central"/>
</dbReference>
<dbReference type="CDD" id="cd06558">
    <property type="entry name" value="crotonase-like"/>
    <property type="match status" value="1"/>
</dbReference>
<dbReference type="FunFam" id="3.90.226.10:FF:000019">
    <property type="entry name" value="Enoyl-CoA hydratase, mitochondrial"/>
    <property type="match status" value="1"/>
</dbReference>
<dbReference type="FunFam" id="1.10.12.10:FF:000001">
    <property type="entry name" value="Probable enoyl-CoA hydratase, mitochondrial"/>
    <property type="match status" value="1"/>
</dbReference>
<dbReference type="Gene3D" id="3.90.226.10">
    <property type="entry name" value="2-enoyl-CoA Hydratase, Chain A, domain 1"/>
    <property type="match status" value="1"/>
</dbReference>
<dbReference type="Gene3D" id="1.10.12.10">
    <property type="entry name" value="Lyase 2-enoyl-coa Hydratase, Chain A, domain 2"/>
    <property type="match status" value="1"/>
</dbReference>
<dbReference type="InterPro" id="IPR029045">
    <property type="entry name" value="ClpP/crotonase-like_dom_sf"/>
</dbReference>
<dbReference type="InterPro" id="IPR018376">
    <property type="entry name" value="Enoyl-CoA_hyd/isom_CS"/>
</dbReference>
<dbReference type="InterPro" id="IPR001753">
    <property type="entry name" value="Enoyl-CoA_hydra/iso"/>
</dbReference>
<dbReference type="InterPro" id="IPR014748">
    <property type="entry name" value="Enoyl-CoA_hydra_C"/>
</dbReference>
<dbReference type="NCBIfam" id="NF004517">
    <property type="entry name" value="PRK05862.1"/>
    <property type="match status" value="1"/>
</dbReference>
<dbReference type="PANTHER" id="PTHR11941:SF54">
    <property type="entry name" value="ENOYL-COA HYDRATASE, MITOCHONDRIAL"/>
    <property type="match status" value="1"/>
</dbReference>
<dbReference type="PANTHER" id="PTHR11941">
    <property type="entry name" value="ENOYL-COA HYDRATASE-RELATED"/>
    <property type="match status" value="1"/>
</dbReference>
<dbReference type="Pfam" id="PF00378">
    <property type="entry name" value="ECH_1"/>
    <property type="match status" value="1"/>
</dbReference>
<dbReference type="SUPFAM" id="SSF52096">
    <property type="entry name" value="ClpP/crotonase"/>
    <property type="match status" value="1"/>
</dbReference>
<dbReference type="PROSITE" id="PS00166">
    <property type="entry name" value="ENOYL_COA_HYDRATASE"/>
    <property type="match status" value="1"/>
</dbReference>
<comment type="function">
    <text evidence="2 3">Straight-chain enoyl-CoA thioesters from C4 up to at least C16 are processed, although with decreasing catalytic rate.</text>
</comment>
<comment type="catalytic activity">
    <reaction evidence="3">
        <text>a (3S)-3-hydroxyacyl-CoA = a (2E)-enoyl-CoA + H2O</text>
        <dbReference type="Rhea" id="RHEA:16105"/>
        <dbReference type="ChEBI" id="CHEBI:15377"/>
        <dbReference type="ChEBI" id="CHEBI:57318"/>
        <dbReference type="ChEBI" id="CHEBI:58856"/>
        <dbReference type="EC" id="4.2.1.17"/>
    </reaction>
    <physiologicalReaction direction="right-to-left" evidence="3">
        <dbReference type="Rhea" id="RHEA:16107"/>
    </physiologicalReaction>
</comment>
<comment type="catalytic activity">
    <reaction evidence="3">
        <text>a 4-saturated-(3S)-3-hydroxyacyl-CoA = a (3E)-enoyl-CoA + H2O</text>
        <dbReference type="Rhea" id="RHEA:20724"/>
        <dbReference type="ChEBI" id="CHEBI:15377"/>
        <dbReference type="ChEBI" id="CHEBI:58521"/>
        <dbReference type="ChEBI" id="CHEBI:137480"/>
        <dbReference type="EC" id="4.2.1.17"/>
    </reaction>
    <physiologicalReaction direction="right-to-left" evidence="3">
        <dbReference type="Rhea" id="RHEA:20726"/>
    </physiologicalReaction>
</comment>
<comment type="catalytic activity">
    <reaction evidence="3">
        <text>(3S)-3-hydroxybutanoyl-CoA = (2E)-butenoyl-CoA + H2O</text>
        <dbReference type="Rhea" id="RHEA:26558"/>
        <dbReference type="ChEBI" id="CHEBI:15377"/>
        <dbReference type="ChEBI" id="CHEBI:57316"/>
        <dbReference type="ChEBI" id="CHEBI:57332"/>
    </reaction>
    <physiologicalReaction direction="right-to-left" evidence="3">
        <dbReference type="Rhea" id="RHEA:26560"/>
    </physiologicalReaction>
</comment>
<comment type="catalytic activity">
    <reaction evidence="3">
        <text>3-hydroxyisovaleryl-CoA = 3-methylbut-2-enoyl-CoA + H2O</text>
        <dbReference type="Rhea" id="RHEA:31079"/>
        <dbReference type="ChEBI" id="CHEBI:15377"/>
        <dbReference type="ChEBI" id="CHEBI:57344"/>
        <dbReference type="ChEBI" id="CHEBI:62555"/>
    </reaction>
    <physiologicalReaction direction="right-to-left" evidence="3">
        <dbReference type="Rhea" id="RHEA:31081"/>
    </physiologicalReaction>
</comment>
<comment type="catalytic activity">
    <reaction evidence="3">
        <text>3-hydroxypropanoyl-CoA = acryloyl-CoA + H2O</text>
        <dbReference type="Rhea" id="RHEA:26518"/>
        <dbReference type="ChEBI" id="CHEBI:15377"/>
        <dbReference type="ChEBI" id="CHEBI:57367"/>
        <dbReference type="ChEBI" id="CHEBI:58528"/>
    </reaction>
    <physiologicalReaction direction="right-to-left" evidence="3">
        <dbReference type="Rhea" id="RHEA:26520"/>
    </physiologicalReaction>
</comment>
<comment type="catalytic activity">
    <reaction evidence="3">
        <text>3-hydroxybutanoyl-CoA = (2E)-butenoyl-CoA + H2O</text>
        <dbReference type="Rhea" id="RHEA:45584"/>
        <dbReference type="ChEBI" id="CHEBI:15377"/>
        <dbReference type="ChEBI" id="CHEBI:57332"/>
        <dbReference type="ChEBI" id="CHEBI:78611"/>
    </reaction>
    <physiologicalReaction direction="right-to-left" evidence="3">
        <dbReference type="Rhea" id="RHEA:45586"/>
    </physiologicalReaction>
</comment>
<comment type="pathway">
    <text>Lipid metabolism; fatty acid beta-oxidation.</text>
</comment>
<comment type="subunit">
    <text evidence="2">Homohexamer; dimer of trimers.</text>
</comment>
<comment type="subcellular location">
    <subcellularLocation>
        <location evidence="2">Mitochondrion matrix</location>
    </subcellularLocation>
</comment>
<comment type="domain">
    <text evidence="1">The monomer is folded into a right-handed spiral of four turns, followed by two small domains which are involved in trimerization.</text>
</comment>
<comment type="similarity">
    <text evidence="4">Belongs to the enoyl-CoA hydratase/isomerase family.</text>
</comment>
<protein>
    <recommendedName>
        <fullName evidence="4">Probable enoyl-CoA hydratase, mitochondrial</fullName>
        <ecNumber evidence="3">4.2.1.17</ecNumber>
    </recommendedName>
    <alternativeName>
        <fullName>Enoyl-CoA hydratase 1</fullName>
    </alternativeName>
    <alternativeName>
        <fullName>Short-chain enoyl-CoA hydratase</fullName>
        <shortName>SCEH</shortName>
    </alternativeName>
</protein>
<sequence>MLKQVIKTVSSSQAPKKYFFKQFCTSTTEKKGRVGLVTLNRPKSLNALSDGLISEINSAVKLFQEDKDVGSIIITGSEKAFAAGADIKEMEKVTLPDAYNNDLLAQWHDLTKIRKPIIAAVNGYALGGGCELAMMCDIIIAGEKAVFGQPEIKLGTIPGCGGTQRLIRAIGKSKAMELVLTGNNLTAVEAEKAGLVSKVVPVEELLTEATKMAEKIASYSQLTVAMAKEAVNASYELTLQEGIRFERRMFHSTFGTHDQKEGMNAFVEKRTPTWHNK</sequence>
<gene>
    <name type="primary">echs1</name>
    <name type="ORF">DDB_G0285071</name>
</gene>
<organism>
    <name type="scientific">Dictyostelium discoideum</name>
    <name type="common">Social amoeba</name>
    <dbReference type="NCBI Taxonomy" id="44689"/>
    <lineage>
        <taxon>Eukaryota</taxon>
        <taxon>Amoebozoa</taxon>
        <taxon>Evosea</taxon>
        <taxon>Eumycetozoa</taxon>
        <taxon>Dictyostelia</taxon>
        <taxon>Dictyosteliales</taxon>
        <taxon>Dictyosteliaceae</taxon>
        <taxon>Dictyostelium</taxon>
    </lineage>
</organism>